<reference key="1">
    <citation type="journal article" date="1998" name="Science">
        <title>Genome sequence of the nematode C. elegans: a platform for investigating biology.</title>
        <authorList>
            <consortium name="The C. elegans sequencing consortium"/>
        </authorList>
    </citation>
    <scope>NUCLEOTIDE SEQUENCE [LARGE SCALE GENOMIC DNA]</scope>
    <source>
        <strain>Bristol N2</strain>
    </source>
</reference>
<reference key="2">
    <citation type="journal article" date="2013" name="PLoS ONE">
        <title>A network of HSPG core proteins and HS modifying enzymes regulates netrin-dependent guidance of D-type motor neurons in Caenorhabditis elegans.</title>
        <authorList>
            <person name="Gysi S."/>
            <person name="Rhiner C."/>
            <person name="Flibotte S."/>
            <person name="Moerman D.G."/>
            <person name="Hengartner M.O."/>
        </authorList>
    </citation>
    <scope>FUNCTION</scope>
</reference>
<reference key="3">
    <citation type="journal article" date="2014" name="Development">
        <title>Syndecan defines precise spindle orientation by modulating Wnt signaling in C. elegans.</title>
        <authorList>
            <person name="Dejima K."/>
            <person name="Kang S."/>
            <person name="Mitani S."/>
            <person name="Cosman P.C."/>
            <person name="Chisholm A.D."/>
        </authorList>
    </citation>
    <scope>FUNCTION</scope>
    <scope>SUBCELLULAR LOCATION</scope>
    <scope>DEVELOPMENTAL STAGE</scope>
    <scope>DOMAIN</scope>
    <scope>DISRUPTION PHENOTYPE</scope>
    <scope>GLYCOSYLATION AT SER-71; SER-86 AND SER-214</scope>
    <scope>MUTAGENESIS OF SER-71; SER-86 AND SER-214</scope>
</reference>
<reference key="4">
    <citation type="journal article" date="2015" name="G3 (Bethesda)">
        <title>SDN-1/Syndecan acts in parallel to the transmembrane molecule MIG-13 to promote anterior neuroblast migration.</title>
        <authorList>
            <person name="Sundararajan L."/>
            <person name="Norris M.L."/>
            <person name="Lundquist E.A."/>
        </authorList>
    </citation>
    <scope>FUNCTION</scope>
    <scope>DISRUPTION PHENOTYPE</scope>
</reference>
<accession>P50605</accession>
<gene>
    <name evidence="8" type="primary">sdn-1</name>
    <name evidence="8" type="ORF">F57C7.3</name>
</gene>
<name>SDC_CAEEL</name>
<evidence type="ECO:0000250" key="1">
    <source>
        <dbReference type="UniProtKB" id="P49415"/>
    </source>
</evidence>
<evidence type="ECO:0000255" key="2"/>
<evidence type="ECO:0000256" key="3">
    <source>
        <dbReference type="SAM" id="MobiDB-lite"/>
    </source>
</evidence>
<evidence type="ECO:0000269" key="4">
    <source>
    </source>
</evidence>
<evidence type="ECO:0000269" key="5">
    <source>
    </source>
</evidence>
<evidence type="ECO:0000269" key="6">
    <source>
    </source>
</evidence>
<evidence type="ECO:0000305" key="7"/>
<evidence type="ECO:0000312" key="8">
    <source>
        <dbReference type="WormBase" id="F57C7.3a"/>
    </source>
</evidence>
<protein>
    <recommendedName>
        <fullName>Probable syndecan</fullName>
    </recommendedName>
</protein>
<comment type="function">
    <text evidence="1 4 5 6">Cell surface proteoglycan that bears heparan sulfate (By similarity). Required for correct mitotic spindle orientation of the ABar blastomere division plane and this may be through modulation of astral microtubule array, and in association with the wnt-signaling proteins mig-5 and dsh-2 (PubMed:25344071). Involved in the migration of AQR and PQR neurons, which descend from the Q neuroblasts (PubMed:26022293). Promotes the axon guidance of D-type motor neurons (PubMed:24066155).</text>
</comment>
<comment type="subcellular location">
    <subcellularLocation>
        <location evidence="5">Membrane</location>
        <topology evidence="2">Single-pass type I membrane protein</topology>
    </subcellularLocation>
    <subcellularLocation>
        <location evidence="5">Cell surface</location>
    </subcellularLocation>
    <subcellularLocation>
        <location evidence="5">Cell junction</location>
    </subcellularLocation>
    <subcellularLocation>
        <location evidence="5">Cytoplasm</location>
    </subcellularLocation>
    <text evidence="5">Initially localizes to the ABar blastomere cell surface during interphase and prophase, and is internalized during metaphase and anaphase.</text>
</comment>
<comment type="developmental stage">
    <text evidence="5">Expressed from the one-cell stage of embryogenesis onwards.</text>
</comment>
<comment type="domain">
    <text evidence="5">The cytoplasmic domain is required for correct mitotic spindle orientation and internalization of sdn-1.</text>
</comment>
<comment type="disruption phenotype">
    <text evidence="5 6">Disrupted mitotic spindle orientation of the ABar blastomere division axis, orientating parallel rather than orthogonally to the division axis of AB derived cells ABpr and ABal (PubMed:25344071). Reduced mig-5 accumulation at the cell contact sites between the ABar and C blastomere cells (PubMed:25344071). Irregular positioning of the AQR and PQR neurons in larva at the L4 stage (PubMed:26022293).</text>
</comment>
<comment type="similarity">
    <text evidence="7">Belongs to the syndecan proteoglycan family.</text>
</comment>
<proteinExistence type="evidence at protein level"/>
<organism>
    <name type="scientific">Caenorhabditis elegans</name>
    <dbReference type="NCBI Taxonomy" id="6239"/>
    <lineage>
        <taxon>Eukaryota</taxon>
        <taxon>Metazoa</taxon>
        <taxon>Ecdysozoa</taxon>
        <taxon>Nematoda</taxon>
        <taxon>Chromadorea</taxon>
        <taxon>Rhabditida</taxon>
        <taxon>Rhabditina</taxon>
        <taxon>Rhabditomorpha</taxon>
        <taxon>Rhabditoidea</taxon>
        <taxon>Rhabditidae</taxon>
        <taxon>Peloderinae</taxon>
        <taxon>Caenorhabditis</taxon>
    </lineage>
</organism>
<sequence>MILKLNFCLSTYSVLILLSLSTQAFAANQAKTKVVPSSTISTKSLKNGISEQVEGSANIPGRLADIEVNGSGYPTDDEDGDDVHGSGKPPSSATTKSDKVTSPSHAVVTAKPTTVPTTTASFKPPVQPKPKPAANDKEIKVEEDEDDDEDEDEDDEDDEEDFADENIHNDEDFFTTTTTTTYRPIVVATTSTPRSAATNPPRQQPPMVTSTISSGPFSPFHETLANGFYAAIAGGVLVAVITAILLVLFVVFRIRKKDEGSYALDEPKQARPYASYGYTKASTKEFYA</sequence>
<keyword id="KW-0965">Cell junction</keyword>
<keyword id="KW-0963">Cytoplasm</keyword>
<keyword id="KW-0325">Glycoprotein</keyword>
<keyword id="KW-0357">Heparan sulfate</keyword>
<keyword id="KW-0472">Membrane</keyword>
<keyword id="KW-0654">Proteoglycan</keyword>
<keyword id="KW-1185">Reference proteome</keyword>
<keyword id="KW-0732">Signal</keyword>
<keyword id="KW-0812">Transmembrane</keyword>
<keyword id="KW-1133">Transmembrane helix</keyword>
<feature type="signal peptide" evidence="2">
    <location>
        <begin position="1"/>
        <end position="26"/>
    </location>
</feature>
<feature type="chain" id="PRO_0000033514" description="Probable syndecan">
    <location>
        <begin position="27"/>
        <end position="288"/>
    </location>
</feature>
<feature type="topological domain" description="Extracellular" evidence="2">
    <location>
        <begin position="27"/>
        <end position="231"/>
    </location>
</feature>
<feature type="transmembrane region" description="Helical" evidence="2">
    <location>
        <begin position="232"/>
        <end position="252"/>
    </location>
</feature>
<feature type="topological domain" description="Cytoplasmic" evidence="2">
    <location>
        <begin position="253"/>
        <end position="288"/>
    </location>
</feature>
<feature type="region of interest" description="Disordered" evidence="3">
    <location>
        <begin position="67"/>
        <end position="175"/>
    </location>
</feature>
<feature type="compositionally biased region" description="Polar residues" evidence="3">
    <location>
        <begin position="89"/>
        <end position="104"/>
    </location>
</feature>
<feature type="compositionally biased region" description="Low complexity" evidence="3">
    <location>
        <begin position="106"/>
        <end position="124"/>
    </location>
</feature>
<feature type="compositionally biased region" description="Acidic residues" evidence="3">
    <location>
        <begin position="141"/>
        <end position="164"/>
    </location>
</feature>
<feature type="glycosylation site" description="N-linked (GlcNAc...) asparagine" evidence="2">
    <location>
        <position position="69"/>
    </location>
</feature>
<feature type="glycosylation site" description="O-linked (Xyl...) (glycosaminoglycan) serine" evidence="5">
    <location>
        <position position="71"/>
    </location>
</feature>
<feature type="glycosylation site" description="O-linked (Xyl...) (glycosaminoglycan) serine" evidence="5">
    <location>
        <position position="86"/>
    </location>
</feature>
<feature type="glycosylation site" description="O-linked (Xyl...) (glycosaminoglycan) serine" evidence="5">
    <location>
        <position position="214"/>
    </location>
</feature>
<feature type="mutagenesis site" description="Reduced heperan sulfate binding; when associated with A-86 and A-214." evidence="5">
    <original>S</original>
    <variation>A</variation>
    <location>
        <position position="71"/>
    </location>
</feature>
<feature type="mutagenesis site" description="Reduced heperan sulfate binding; when associated with A-71 and A-214." evidence="5">
    <original>S</original>
    <variation>A</variation>
    <location>
        <position position="86"/>
    </location>
</feature>
<feature type="mutagenesis site" description="Reduced heperan sulfate binding; when associated with A-71 and A-86." evidence="5">
    <original>S</original>
    <variation>A</variation>
    <location>
        <position position="214"/>
    </location>
</feature>
<dbReference type="EMBL" id="BX284606">
    <property type="protein sequence ID" value="CAA93474.1"/>
    <property type="molecule type" value="Genomic_DNA"/>
</dbReference>
<dbReference type="PIR" id="T22846">
    <property type="entry name" value="T22846"/>
</dbReference>
<dbReference type="RefSeq" id="NP_741894.1">
    <property type="nucleotide sequence ID" value="NM_171972.7"/>
</dbReference>
<dbReference type="BioGRID" id="46171">
    <property type="interactions" value="1"/>
</dbReference>
<dbReference type="ELM" id="P50605"/>
<dbReference type="FunCoup" id="P50605">
    <property type="interactions" value="1096"/>
</dbReference>
<dbReference type="STRING" id="6239.F57C7.3a.1"/>
<dbReference type="GlyCosmos" id="P50605">
    <property type="glycosylation" value="4 sites, No reported glycans"/>
</dbReference>
<dbReference type="iPTMnet" id="P50605"/>
<dbReference type="PaxDb" id="6239-F57C7.3a"/>
<dbReference type="PeptideAtlas" id="P50605"/>
<dbReference type="EnsemblMetazoa" id="F57C7.3a.1">
    <property type="protein sequence ID" value="F57C7.3a.1"/>
    <property type="gene ID" value="WBGene00004749"/>
</dbReference>
<dbReference type="GeneID" id="181259"/>
<dbReference type="KEGG" id="cel:CELE_F57C7.3"/>
<dbReference type="UCSC" id="F57C7.3a">
    <property type="organism name" value="c. elegans"/>
</dbReference>
<dbReference type="AGR" id="WB:WBGene00004749"/>
<dbReference type="CTD" id="181259"/>
<dbReference type="WormBase" id="F57C7.3a">
    <property type="protein sequence ID" value="CE05996"/>
    <property type="gene ID" value="WBGene00004749"/>
    <property type="gene designation" value="sdn-1"/>
</dbReference>
<dbReference type="eggNOG" id="ENOG502RZ6V">
    <property type="taxonomic scope" value="Eukaryota"/>
</dbReference>
<dbReference type="InParanoid" id="P50605"/>
<dbReference type="OMA" id="FHETMTN"/>
<dbReference type="OrthoDB" id="10044468at2759"/>
<dbReference type="Reactome" id="R-CEL-1971475">
    <property type="pathway name" value="A tetrasaccharide linker sequence is required for GAG synthesis"/>
</dbReference>
<dbReference type="Reactome" id="R-CEL-2022928">
    <property type="pathway name" value="HS-GAG biosynthesis"/>
</dbReference>
<dbReference type="Reactome" id="R-CEL-2024096">
    <property type="pathway name" value="HS-GAG degradation"/>
</dbReference>
<dbReference type="Reactome" id="R-CEL-3000170">
    <property type="pathway name" value="Syndecan interactions"/>
</dbReference>
<dbReference type="Reactome" id="R-CEL-381426">
    <property type="pathway name" value="Regulation of Insulin-like Growth Factor (IGF) transport and uptake by Insulin-like Growth Factor Binding Proteins (IGFBPs)"/>
</dbReference>
<dbReference type="Reactome" id="R-CEL-3928662">
    <property type="pathway name" value="EPHB-mediated forward signaling"/>
</dbReference>
<dbReference type="Reactome" id="R-CEL-8957275">
    <property type="pathway name" value="Post-translational protein phosphorylation"/>
</dbReference>
<dbReference type="PRO" id="PR:P50605"/>
<dbReference type="Proteomes" id="UP000001940">
    <property type="component" value="Chromosome X"/>
</dbReference>
<dbReference type="Bgee" id="WBGene00004749">
    <property type="expression patterns" value="Expressed in pharyngeal muscle cell (C elegans) and 4 other cell types or tissues"/>
</dbReference>
<dbReference type="ExpressionAtlas" id="P50605">
    <property type="expression patterns" value="baseline and differential"/>
</dbReference>
<dbReference type="GO" id="GO:0070161">
    <property type="term" value="C:anchoring junction"/>
    <property type="evidence" value="ECO:0007669"/>
    <property type="project" value="UniProtKB-SubCell"/>
</dbReference>
<dbReference type="GO" id="GO:0009986">
    <property type="term" value="C:cell surface"/>
    <property type="evidence" value="ECO:0000314"/>
    <property type="project" value="WormBase"/>
</dbReference>
<dbReference type="GO" id="GO:0005737">
    <property type="term" value="C:cytoplasm"/>
    <property type="evidence" value="ECO:0007669"/>
    <property type="project" value="UniProtKB-SubCell"/>
</dbReference>
<dbReference type="GO" id="GO:0016020">
    <property type="term" value="C:membrane"/>
    <property type="evidence" value="ECO:0007669"/>
    <property type="project" value="UniProtKB-SubCell"/>
</dbReference>
<dbReference type="GO" id="GO:0016477">
    <property type="term" value="P:cell migration"/>
    <property type="evidence" value="ECO:0000318"/>
    <property type="project" value="GO_Central"/>
</dbReference>
<dbReference type="GO" id="GO:0009792">
    <property type="term" value="P:embryo development ending in birth or egg hatching"/>
    <property type="evidence" value="ECO:0000316"/>
    <property type="project" value="WormBase"/>
</dbReference>
<dbReference type="GO" id="GO:0048730">
    <property type="term" value="P:epidermis morphogenesis"/>
    <property type="evidence" value="ECO:0000315"/>
    <property type="project" value="WormBase"/>
</dbReference>
<dbReference type="GO" id="GO:0002119">
    <property type="term" value="P:nematode larval development"/>
    <property type="evidence" value="ECO:0000316"/>
    <property type="project" value="WormBase"/>
</dbReference>
<dbReference type="InterPro" id="IPR001050">
    <property type="entry name" value="Syndecan"/>
</dbReference>
<dbReference type="InterPro" id="IPR027789">
    <property type="entry name" value="Syndecan/Neurexin_dom"/>
</dbReference>
<dbReference type="InterPro" id="IPR030479">
    <property type="entry name" value="Syndecan_CS"/>
</dbReference>
<dbReference type="PANTHER" id="PTHR10915">
    <property type="entry name" value="SYNDECAN"/>
    <property type="match status" value="1"/>
</dbReference>
<dbReference type="PANTHER" id="PTHR10915:SF1">
    <property type="entry name" value="SYNDECAN"/>
    <property type="match status" value="1"/>
</dbReference>
<dbReference type="Pfam" id="PF01034">
    <property type="entry name" value="Syndecan"/>
    <property type="match status" value="1"/>
</dbReference>
<dbReference type="PROSITE" id="PS00964">
    <property type="entry name" value="SYNDECAN"/>
    <property type="match status" value="1"/>
</dbReference>